<evidence type="ECO:0000255" key="1"/>
<evidence type="ECO:0000255" key="2">
    <source>
        <dbReference type="PROSITE-ProRule" id="PRU00059"/>
    </source>
</evidence>
<evidence type="ECO:0000269" key="3">
    <source>
    </source>
</evidence>
<evidence type="ECO:0000303" key="4">
    <source>
    </source>
</evidence>
<evidence type="ECO:0000305" key="5"/>
<evidence type="ECO:0000305" key="6">
    <source>
    </source>
</evidence>
<protein>
    <recommendedName>
        <fullName evidence="4">Venom CUB domain-containing protein 1</fullName>
    </recommendedName>
</protein>
<feature type="signal peptide" evidence="1">
    <location>
        <begin position="1"/>
        <end position="18"/>
    </location>
</feature>
<feature type="chain" id="PRO_5025551830" description="Venom CUB domain-containing protein 1" evidence="5">
    <location>
        <begin position="19"/>
        <end position="129"/>
    </location>
</feature>
<feature type="domain" description="CUB" evidence="2">
    <location>
        <begin position="19"/>
        <end position="121"/>
    </location>
</feature>
<feature type="disulfide bond" evidence="2">
    <location>
        <begin position="66"/>
        <end position="83"/>
    </location>
</feature>
<reference key="1">
    <citation type="journal article" date="2019" name="Toxins">
        <title>Missiles of mass disruption: composition and glandular origin of venom used as a projectile defensive weapon by the assassin bug Platymeris rhadamanthus.</title>
        <authorList>
            <person name="Walker A.A."/>
            <person name="Robinson S.D."/>
            <person name="Undheim E.A.B."/>
            <person name="Jin J."/>
            <person name="Han X."/>
            <person name="Fry B.G."/>
            <person name="Vetter I."/>
            <person name="King G.F."/>
        </authorList>
    </citation>
    <scope>NUCLEOTIDE SEQUENCE [MRNA]</scope>
    <scope>IDENTIFICATION BY MASS SPECTROMETRY</scope>
    <scope>SUBCELLULAR LOCATION</scope>
    <source>
        <tissue>Venom</tissue>
        <tissue>Venom gland</tissue>
    </source>
</reference>
<sequence length="129" mass="14027">MKLLGVLITIYCIASTLAIDVNVPSNGMADLNPVVNDGKSETEWTITTSANCHILLSCAVKGEESCDDVSIVTKDGDKERKLCPMATNSFTVQDFINEKVYVKIMTTGKDYKASCKAYSITNPKQPNQA</sequence>
<organism>
    <name type="scientific">Platymeris rhadamanthus</name>
    <name type="common">Red spot assassin bug</name>
    <dbReference type="NCBI Taxonomy" id="1134088"/>
    <lineage>
        <taxon>Eukaryota</taxon>
        <taxon>Metazoa</taxon>
        <taxon>Ecdysozoa</taxon>
        <taxon>Arthropoda</taxon>
        <taxon>Hexapoda</taxon>
        <taxon>Insecta</taxon>
        <taxon>Pterygota</taxon>
        <taxon>Neoptera</taxon>
        <taxon>Paraneoptera</taxon>
        <taxon>Hemiptera</taxon>
        <taxon>Heteroptera</taxon>
        <taxon>Panheteroptera</taxon>
        <taxon>Cimicomorpha</taxon>
        <taxon>Reduviidae</taxon>
        <taxon>Platymeris</taxon>
    </lineage>
</organism>
<accession>A0A6B9L3R4</accession>
<name>CUB1_PLARH</name>
<keyword id="KW-1015">Disulfide bond</keyword>
<keyword id="KW-0964">Secreted</keyword>
<keyword id="KW-0732">Signal</keyword>
<comment type="subcellular location">
    <subcellularLocation>
        <location evidence="3">Secreted</location>
    </subcellularLocation>
</comment>
<comment type="tissue specificity">
    <text evidence="6">Expressed by the venom gland.</text>
</comment>
<comment type="PTM">
    <text evidence="5">Contains 2 disulfide bonds.</text>
</comment>
<comment type="similarity">
    <text evidence="5">Belongs to the venom CUB family.</text>
</comment>
<dbReference type="EMBL" id="MN208306">
    <property type="protein sequence ID" value="QHB21495.1"/>
    <property type="molecule type" value="mRNA"/>
</dbReference>
<dbReference type="GO" id="GO:0005576">
    <property type="term" value="C:extracellular region"/>
    <property type="evidence" value="ECO:0007669"/>
    <property type="project" value="UniProtKB-SubCell"/>
</dbReference>
<proteinExistence type="evidence at protein level"/>